<protein>
    <recommendedName>
        <fullName evidence="1">Aspartate--tRNA(Asp/Asn) ligase</fullName>
        <ecNumber evidence="1">6.1.1.23</ecNumber>
    </recommendedName>
    <alternativeName>
        <fullName evidence="1">Aspartyl-tRNA synthetase</fullName>
        <shortName evidence="1">AspRS</shortName>
    </alternativeName>
    <alternativeName>
        <fullName evidence="1">Non-discriminating aspartyl-tRNA synthetase</fullName>
        <shortName evidence="1">ND-AspRS</shortName>
    </alternativeName>
</protein>
<name>SYDND_SYNWW</name>
<reference key="1">
    <citation type="journal article" date="2010" name="Environ. Microbiol.">
        <title>The genome of Syntrophomonas wolfei: new insights into syntrophic metabolism and biohydrogen production.</title>
        <authorList>
            <person name="Sieber J.R."/>
            <person name="Sims D.R."/>
            <person name="Han C."/>
            <person name="Kim E."/>
            <person name="Lykidis A."/>
            <person name="Lapidus A.L."/>
            <person name="McDonnald E."/>
            <person name="Rohlin L."/>
            <person name="Culley D.E."/>
            <person name="Gunsalus R."/>
            <person name="McInerney M.J."/>
        </authorList>
    </citation>
    <scope>NUCLEOTIDE SEQUENCE [LARGE SCALE GENOMIC DNA]</scope>
    <source>
        <strain>DSM 2245B / Goettingen</strain>
    </source>
</reference>
<evidence type="ECO:0000255" key="1">
    <source>
        <dbReference type="HAMAP-Rule" id="MF_00044"/>
    </source>
</evidence>
<sequence length="586" mass="66867">MKRTHNATELDIHLVGREVMLNGWVDTRRDHGGLIFVDLRDRSGIIQLVFSPEVKEEAFHLAEQIRSEYVIAVRGKLSLRPEATENPNLKTGKVEVYVEDIEVLSPAKTPPFYIENDIDVDENLRLKYRYLDLRRPEMRDNLLLRHRVVKCMRDFLDSRGFIEIETPILTKSTPEGARDYLVPSRVHPGEFYALPQSPQIFKQILMVAGMEKYFQIARCFRDEDLRADRQPEFTQLDMEMSFVDEEDIIVLVEEMMAEIFFKAAGKVIRTPFPRLAYDDAMINYGSDKPDLRFGLEIVELSEMLQNTQFKVFASALQSGGVVRALNAKGCGSFTRREIDALGAMAVENGAKGMAWILVQENELRSPITKFLSEEEIEQILMTTGAEAGDLILFGADQAEIVARVMGILRLELGRKKGLIAEEELNFVWVTDFPLLEYDEEEKRYQAKHHPFTSPRLEDIEIMDSEPGRVKARAYDLVLNGTELGGGSIRIHRREWQEKMFSVLGMSQEEARDKFGFMLEAFEYGTPPHGGIAFGVDRLLMLLAGRNSVRDVMAFPKTQSASCPMTEAPSTVSARQLRELALRIREK</sequence>
<comment type="function">
    <text evidence="1">Aspartyl-tRNA synthetase with relaxed tRNA specificity since it is able to aspartylate not only its cognate tRNA(Asp) but also tRNA(Asn). Reaction proceeds in two steps: L-aspartate is first activated by ATP to form Asp-AMP and then transferred to the acceptor end of tRNA(Asp/Asn).</text>
</comment>
<comment type="catalytic activity">
    <reaction evidence="1">
        <text>tRNA(Asx) + L-aspartate + ATP = L-aspartyl-tRNA(Asx) + AMP + diphosphate</text>
        <dbReference type="Rhea" id="RHEA:18349"/>
        <dbReference type="Rhea" id="RHEA-COMP:9710"/>
        <dbReference type="Rhea" id="RHEA-COMP:9711"/>
        <dbReference type="ChEBI" id="CHEBI:29991"/>
        <dbReference type="ChEBI" id="CHEBI:30616"/>
        <dbReference type="ChEBI" id="CHEBI:33019"/>
        <dbReference type="ChEBI" id="CHEBI:78442"/>
        <dbReference type="ChEBI" id="CHEBI:78516"/>
        <dbReference type="ChEBI" id="CHEBI:456215"/>
        <dbReference type="EC" id="6.1.1.23"/>
    </reaction>
</comment>
<comment type="subunit">
    <text evidence="1">Homodimer.</text>
</comment>
<comment type="subcellular location">
    <subcellularLocation>
        <location evidence="1">Cytoplasm</location>
    </subcellularLocation>
</comment>
<comment type="similarity">
    <text evidence="1">Belongs to the class-II aminoacyl-tRNA synthetase family. Type 1 subfamily.</text>
</comment>
<proteinExistence type="inferred from homology"/>
<organism>
    <name type="scientific">Syntrophomonas wolfei subsp. wolfei (strain DSM 2245B / Goettingen)</name>
    <dbReference type="NCBI Taxonomy" id="335541"/>
    <lineage>
        <taxon>Bacteria</taxon>
        <taxon>Bacillati</taxon>
        <taxon>Bacillota</taxon>
        <taxon>Clostridia</taxon>
        <taxon>Eubacteriales</taxon>
        <taxon>Syntrophomonadaceae</taxon>
        <taxon>Syntrophomonas</taxon>
    </lineage>
</organism>
<dbReference type="EC" id="6.1.1.23" evidence="1"/>
<dbReference type="EMBL" id="CP000448">
    <property type="protein sequence ID" value="ABI68133.1"/>
    <property type="molecule type" value="Genomic_DNA"/>
</dbReference>
<dbReference type="RefSeq" id="WP_011640238.1">
    <property type="nucleotide sequence ID" value="NC_008346.1"/>
</dbReference>
<dbReference type="SMR" id="Q0AYS1"/>
<dbReference type="STRING" id="335541.Swol_0812"/>
<dbReference type="KEGG" id="swo:Swol_0812"/>
<dbReference type="eggNOG" id="COG0173">
    <property type="taxonomic scope" value="Bacteria"/>
</dbReference>
<dbReference type="HOGENOM" id="CLU_014330_3_2_9"/>
<dbReference type="OrthoDB" id="9802326at2"/>
<dbReference type="Proteomes" id="UP000001968">
    <property type="component" value="Chromosome"/>
</dbReference>
<dbReference type="GO" id="GO:0005737">
    <property type="term" value="C:cytoplasm"/>
    <property type="evidence" value="ECO:0007669"/>
    <property type="project" value="UniProtKB-SubCell"/>
</dbReference>
<dbReference type="GO" id="GO:0004815">
    <property type="term" value="F:aspartate-tRNA ligase activity"/>
    <property type="evidence" value="ECO:0007669"/>
    <property type="project" value="UniProtKB-UniRule"/>
</dbReference>
<dbReference type="GO" id="GO:0050560">
    <property type="term" value="F:aspartate-tRNA(Asn) ligase activity"/>
    <property type="evidence" value="ECO:0007669"/>
    <property type="project" value="UniProtKB-EC"/>
</dbReference>
<dbReference type="GO" id="GO:0005524">
    <property type="term" value="F:ATP binding"/>
    <property type="evidence" value="ECO:0007669"/>
    <property type="project" value="UniProtKB-UniRule"/>
</dbReference>
<dbReference type="GO" id="GO:0140096">
    <property type="term" value="F:catalytic activity, acting on a protein"/>
    <property type="evidence" value="ECO:0007669"/>
    <property type="project" value="UniProtKB-ARBA"/>
</dbReference>
<dbReference type="GO" id="GO:0003676">
    <property type="term" value="F:nucleic acid binding"/>
    <property type="evidence" value="ECO:0007669"/>
    <property type="project" value="InterPro"/>
</dbReference>
<dbReference type="GO" id="GO:0016740">
    <property type="term" value="F:transferase activity"/>
    <property type="evidence" value="ECO:0007669"/>
    <property type="project" value="UniProtKB-ARBA"/>
</dbReference>
<dbReference type="GO" id="GO:0006422">
    <property type="term" value="P:aspartyl-tRNA aminoacylation"/>
    <property type="evidence" value="ECO:0007669"/>
    <property type="project" value="UniProtKB-UniRule"/>
</dbReference>
<dbReference type="CDD" id="cd00777">
    <property type="entry name" value="AspRS_core"/>
    <property type="match status" value="1"/>
</dbReference>
<dbReference type="CDD" id="cd04317">
    <property type="entry name" value="EcAspRS_like_N"/>
    <property type="match status" value="1"/>
</dbReference>
<dbReference type="Gene3D" id="3.30.930.10">
    <property type="entry name" value="Bira Bifunctional Protein, Domain 2"/>
    <property type="match status" value="1"/>
</dbReference>
<dbReference type="Gene3D" id="3.30.1360.30">
    <property type="entry name" value="GAD-like domain"/>
    <property type="match status" value="1"/>
</dbReference>
<dbReference type="Gene3D" id="2.40.50.140">
    <property type="entry name" value="Nucleic acid-binding proteins"/>
    <property type="match status" value="1"/>
</dbReference>
<dbReference type="HAMAP" id="MF_00044">
    <property type="entry name" value="Asp_tRNA_synth_type1"/>
    <property type="match status" value="1"/>
</dbReference>
<dbReference type="InterPro" id="IPR004364">
    <property type="entry name" value="Aa-tRNA-synt_II"/>
</dbReference>
<dbReference type="InterPro" id="IPR006195">
    <property type="entry name" value="aa-tRNA-synth_II"/>
</dbReference>
<dbReference type="InterPro" id="IPR045864">
    <property type="entry name" value="aa-tRNA-synth_II/BPL/LPL"/>
</dbReference>
<dbReference type="InterPro" id="IPR004524">
    <property type="entry name" value="Asp-tRNA-ligase_1"/>
</dbReference>
<dbReference type="InterPro" id="IPR047089">
    <property type="entry name" value="Asp-tRNA-ligase_1_N"/>
</dbReference>
<dbReference type="InterPro" id="IPR002312">
    <property type="entry name" value="Asp/Asn-tRNA-synth_IIb"/>
</dbReference>
<dbReference type="InterPro" id="IPR047090">
    <property type="entry name" value="AspRS_core"/>
</dbReference>
<dbReference type="InterPro" id="IPR004115">
    <property type="entry name" value="GAD-like_sf"/>
</dbReference>
<dbReference type="InterPro" id="IPR029351">
    <property type="entry name" value="GAD_dom"/>
</dbReference>
<dbReference type="InterPro" id="IPR012340">
    <property type="entry name" value="NA-bd_OB-fold"/>
</dbReference>
<dbReference type="InterPro" id="IPR004365">
    <property type="entry name" value="NA-bd_OB_tRNA"/>
</dbReference>
<dbReference type="NCBIfam" id="TIGR00459">
    <property type="entry name" value="aspS_bact"/>
    <property type="match status" value="1"/>
</dbReference>
<dbReference type="NCBIfam" id="NF001750">
    <property type="entry name" value="PRK00476.1"/>
    <property type="match status" value="1"/>
</dbReference>
<dbReference type="PANTHER" id="PTHR22594:SF5">
    <property type="entry name" value="ASPARTATE--TRNA LIGASE, MITOCHONDRIAL"/>
    <property type="match status" value="1"/>
</dbReference>
<dbReference type="PANTHER" id="PTHR22594">
    <property type="entry name" value="ASPARTYL/LYSYL-TRNA SYNTHETASE"/>
    <property type="match status" value="1"/>
</dbReference>
<dbReference type="Pfam" id="PF02938">
    <property type="entry name" value="GAD"/>
    <property type="match status" value="1"/>
</dbReference>
<dbReference type="Pfam" id="PF00152">
    <property type="entry name" value="tRNA-synt_2"/>
    <property type="match status" value="1"/>
</dbReference>
<dbReference type="Pfam" id="PF01336">
    <property type="entry name" value="tRNA_anti-codon"/>
    <property type="match status" value="1"/>
</dbReference>
<dbReference type="PRINTS" id="PR01042">
    <property type="entry name" value="TRNASYNTHASP"/>
</dbReference>
<dbReference type="SUPFAM" id="SSF55681">
    <property type="entry name" value="Class II aaRS and biotin synthetases"/>
    <property type="match status" value="1"/>
</dbReference>
<dbReference type="SUPFAM" id="SSF55261">
    <property type="entry name" value="GAD domain-like"/>
    <property type="match status" value="1"/>
</dbReference>
<dbReference type="SUPFAM" id="SSF50249">
    <property type="entry name" value="Nucleic acid-binding proteins"/>
    <property type="match status" value="1"/>
</dbReference>
<dbReference type="PROSITE" id="PS50862">
    <property type="entry name" value="AA_TRNA_LIGASE_II"/>
    <property type="match status" value="1"/>
</dbReference>
<gene>
    <name evidence="1" type="primary">aspS</name>
    <name type="ordered locus">Swol_0812</name>
</gene>
<keyword id="KW-0030">Aminoacyl-tRNA synthetase</keyword>
<keyword id="KW-0067">ATP-binding</keyword>
<keyword id="KW-0963">Cytoplasm</keyword>
<keyword id="KW-0436">Ligase</keyword>
<keyword id="KW-0547">Nucleotide-binding</keyword>
<keyword id="KW-0648">Protein biosynthesis</keyword>
<keyword id="KW-1185">Reference proteome</keyword>
<accession>Q0AYS1</accession>
<feature type="chain" id="PRO_1000006776" description="Aspartate--tRNA(Asp/Asn) ligase">
    <location>
        <begin position="1"/>
        <end position="586"/>
    </location>
</feature>
<feature type="region of interest" description="Aspartate" evidence="1">
    <location>
        <begin position="199"/>
        <end position="202"/>
    </location>
</feature>
<feature type="binding site" evidence="1">
    <location>
        <position position="175"/>
    </location>
    <ligand>
        <name>L-aspartate</name>
        <dbReference type="ChEBI" id="CHEBI:29991"/>
    </ligand>
</feature>
<feature type="binding site" evidence="1">
    <location>
        <begin position="221"/>
        <end position="223"/>
    </location>
    <ligand>
        <name>ATP</name>
        <dbReference type="ChEBI" id="CHEBI:30616"/>
    </ligand>
</feature>
<feature type="binding site" evidence="1">
    <location>
        <position position="221"/>
    </location>
    <ligand>
        <name>L-aspartate</name>
        <dbReference type="ChEBI" id="CHEBI:29991"/>
    </ligand>
</feature>
<feature type="binding site" evidence="1">
    <location>
        <position position="230"/>
    </location>
    <ligand>
        <name>ATP</name>
        <dbReference type="ChEBI" id="CHEBI:30616"/>
    </ligand>
</feature>
<feature type="binding site" evidence="1">
    <location>
        <position position="448"/>
    </location>
    <ligand>
        <name>L-aspartate</name>
        <dbReference type="ChEBI" id="CHEBI:29991"/>
    </ligand>
</feature>
<feature type="binding site" evidence="1">
    <location>
        <position position="482"/>
    </location>
    <ligand>
        <name>ATP</name>
        <dbReference type="ChEBI" id="CHEBI:30616"/>
    </ligand>
</feature>
<feature type="binding site" evidence="1">
    <location>
        <position position="489"/>
    </location>
    <ligand>
        <name>L-aspartate</name>
        <dbReference type="ChEBI" id="CHEBI:29991"/>
    </ligand>
</feature>
<feature type="binding site" evidence="1">
    <location>
        <begin position="534"/>
        <end position="537"/>
    </location>
    <ligand>
        <name>ATP</name>
        <dbReference type="ChEBI" id="CHEBI:30616"/>
    </ligand>
</feature>
<feature type="site" description="Important for tRNA non-discrimination" evidence="1">
    <location>
        <position position="31"/>
    </location>
</feature>